<reference key="1">
    <citation type="journal article" date="1994" name="Proc. Natl. Acad. Sci. U.S.A.">
        <title>Primary structure of a beta subunit of alpha-dendrotoxin-sensitive K+ channels from bovine brain.</title>
        <authorList>
            <person name="Scott V.E.S."/>
            <person name="Rettig J."/>
            <person name="Parcej D.N."/>
            <person name="Keen J.N."/>
            <person name="Findlay J.B.C."/>
            <person name="Pongs O."/>
            <person name="Dolly J.O."/>
        </authorList>
    </citation>
    <scope>NUCLEOTIDE SEQUENCE [MRNA]</scope>
    <scope>PROTEIN SEQUENCE OF 1-18; 78-107; 198-215; 217-233 AND 266-294</scope>
    <source>
        <tissue>Brain</tissue>
    </source>
</reference>
<reference key="2">
    <citation type="submission" date="2005-03" db="EMBL/GenBank/DDBJ databases">
        <title>Ion channels in lens epithelia.</title>
        <authorList>
            <person name="Rae J.L."/>
        </authorList>
    </citation>
    <scope>NUCLEOTIDE SEQUENCE [MRNA]</scope>
    <source>
        <tissue>Lens epithelium</tissue>
    </source>
</reference>
<reference key="3">
    <citation type="journal article" date="2001" name="J. Comp. Neurol.">
        <title>Subunit composition and novel localization of K+ channels in spinal cord.</title>
        <authorList>
            <person name="Rasband M.N."/>
            <person name="Trimmer J.S."/>
        </authorList>
    </citation>
    <scope>INTERACTION WITH KCNA1 AND KCNA2</scope>
    <scope>SUBUNIT</scope>
    <scope>SUBCELLULAR LOCATION</scope>
    <scope>TISSUE SPECIFICITY</scope>
</reference>
<dbReference type="EC" id="1.1.1.-" evidence="2"/>
<dbReference type="EMBL" id="X70661">
    <property type="protein sequence ID" value="CAA49999.1"/>
    <property type="molecule type" value="mRNA"/>
</dbReference>
<dbReference type="EMBL" id="AY950785">
    <property type="protein sequence ID" value="AAX51985.1"/>
    <property type="molecule type" value="mRNA"/>
</dbReference>
<dbReference type="PIR" id="A53131">
    <property type="entry name" value="A53131"/>
</dbReference>
<dbReference type="RefSeq" id="NP_001014405.1">
    <property type="nucleotide sequence ID" value="NM_001014383.1"/>
</dbReference>
<dbReference type="RefSeq" id="XP_005217169.1">
    <property type="nucleotide sequence ID" value="XM_005217112.5"/>
</dbReference>
<dbReference type="RefSeq" id="XP_059731481.1">
    <property type="nucleotide sequence ID" value="XM_059875498.1"/>
</dbReference>
<dbReference type="SMR" id="Q27955"/>
<dbReference type="CORUM" id="Q27955"/>
<dbReference type="FunCoup" id="Q27955">
    <property type="interactions" value="891"/>
</dbReference>
<dbReference type="STRING" id="9913.ENSBTAP00000042823"/>
<dbReference type="PaxDb" id="9913-ENSBTAP00000042823"/>
<dbReference type="GeneID" id="541597"/>
<dbReference type="KEGG" id="bta:541597"/>
<dbReference type="CTD" id="8514"/>
<dbReference type="VEuPathDB" id="HostDB:ENSBTAG00000008125"/>
<dbReference type="eggNOG" id="KOG1575">
    <property type="taxonomic scope" value="Eukaryota"/>
</dbReference>
<dbReference type="InParanoid" id="Q27955"/>
<dbReference type="OMA" id="YLPWSPL"/>
<dbReference type="OrthoDB" id="1720422at2759"/>
<dbReference type="TreeFam" id="TF324563"/>
<dbReference type="Reactome" id="R-BTA-1296072">
    <property type="pathway name" value="Voltage gated Potassium channels"/>
</dbReference>
<dbReference type="Reactome" id="R-BTA-6798695">
    <property type="pathway name" value="Neutrophil degranulation"/>
</dbReference>
<dbReference type="Proteomes" id="UP000009136">
    <property type="component" value="Chromosome 16"/>
</dbReference>
<dbReference type="Bgee" id="ENSBTAG00000008125">
    <property type="expression patterns" value="Expressed in temporal cortex and 102 other cell types or tissues"/>
</dbReference>
<dbReference type="GO" id="GO:0030424">
    <property type="term" value="C:axon"/>
    <property type="evidence" value="ECO:0000250"/>
    <property type="project" value="UniProtKB"/>
</dbReference>
<dbReference type="GO" id="GO:0009898">
    <property type="term" value="C:cytoplasmic side of plasma membrane"/>
    <property type="evidence" value="ECO:0000250"/>
    <property type="project" value="UniProtKB"/>
</dbReference>
<dbReference type="GO" id="GO:0005856">
    <property type="term" value="C:cytoskeleton"/>
    <property type="evidence" value="ECO:0007669"/>
    <property type="project" value="UniProtKB-SubCell"/>
</dbReference>
<dbReference type="GO" id="GO:0005829">
    <property type="term" value="C:cytosol"/>
    <property type="evidence" value="ECO:0000250"/>
    <property type="project" value="UniProtKB"/>
</dbReference>
<dbReference type="GO" id="GO:0044224">
    <property type="term" value="C:juxtaparanode region of axon"/>
    <property type="evidence" value="ECO:0000250"/>
    <property type="project" value="UniProtKB"/>
</dbReference>
<dbReference type="GO" id="GO:0016020">
    <property type="term" value="C:membrane"/>
    <property type="evidence" value="ECO:0000250"/>
    <property type="project" value="UniProtKB"/>
</dbReference>
<dbReference type="GO" id="GO:0043005">
    <property type="term" value="C:neuron projection"/>
    <property type="evidence" value="ECO:0000250"/>
    <property type="project" value="UniProtKB"/>
</dbReference>
<dbReference type="GO" id="GO:1990031">
    <property type="term" value="C:pinceau fiber"/>
    <property type="evidence" value="ECO:0000250"/>
    <property type="project" value="UniProtKB"/>
</dbReference>
<dbReference type="GO" id="GO:0034705">
    <property type="term" value="C:potassium channel complex"/>
    <property type="evidence" value="ECO:0000250"/>
    <property type="project" value="UniProtKB"/>
</dbReference>
<dbReference type="GO" id="GO:0045202">
    <property type="term" value="C:synapse"/>
    <property type="evidence" value="ECO:0007669"/>
    <property type="project" value="UniProtKB-SubCell"/>
</dbReference>
<dbReference type="GO" id="GO:0008076">
    <property type="term" value="C:voltage-gated potassium channel complex"/>
    <property type="evidence" value="ECO:0000318"/>
    <property type="project" value="GO_Central"/>
</dbReference>
<dbReference type="GO" id="GO:0004033">
    <property type="term" value="F:aldo-keto reductase (NADPH) activity"/>
    <property type="evidence" value="ECO:0000250"/>
    <property type="project" value="UniProtKB"/>
</dbReference>
<dbReference type="GO" id="GO:1990002">
    <property type="term" value="F:methylglyoxal reductase (NADPH) (acetol producing) activity"/>
    <property type="evidence" value="ECO:0007669"/>
    <property type="project" value="RHEA"/>
</dbReference>
<dbReference type="GO" id="GO:0015459">
    <property type="term" value="F:potassium channel regulator activity"/>
    <property type="evidence" value="ECO:0000250"/>
    <property type="project" value="UniProtKB"/>
</dbReference>
<dbReference type="GO" id="GO:0044325">
    <property type="term" value="F:transmembrane transporter binding"/>
    <property type="evidence" value="ECO:0000318"/>
    <property type="project" value="GO_Central"/>
</dbReference>
<dbReference type="GO" id="GO:0005249">
    <property type="term" value="F:voltage-gated potassium channel activity"/>
    <property type="evidence" value="ECO:0007669"/>
    <property type="project" value="InterPro"/>
</dbReference>
<dbReference type="GO" id="GO:1901379">
    <property type="term" value="P:regulation of potassium ion transmembrane transport"/>
    <property type="evidence" value="ECO:0000250"/>
    <property type="project" value="UniProtKB"/>
</dbReference>
<dbReference type="GO" id="GO:2000008">
    <property type="term" value="P:regulation of protein localization to cell surface"/>
    <property type="evidence" value="ECO:0000250"/>
    <property type="project" value="UniProtKB"/>
</dbReference>
<dbReference type="CDD" id="cd19141">
    <property type="entry name" value="Aldo_ket_red_shaker"/>
    <property type="match status" value="1"/>
</dbReference>
<dbReference type="FunFam" id="3.20.20.100:FF:000001">
    <property type="entry name" value="voltage-gated potassium channel subunit beta-2 isoform X2"/>
    <property type="match status" value="1"/>
</dbReference>
<dbReference type="Gene3D" id="3.20.20.100">
    <property type="entry name" value="NADP-dependent oxidoreductase domain"/>
    <property type="match status" value="1"/>
</dbReference>
<dbReference type="InterPro" id="IPR005983">
    <property type="entry name" value="K_chnl_volt-dep_bsu_KCNAB"/>
</dbReference>
<dbReference type="InterPro" id="IPR005399">
    <property type="entry name" value="K_chnl_volt-dep_bsu_KCNAB-rel"/>
</dbReference>
<dbReference type="InterPro" id="IPR005401">
    <property type="entry name" value="K_chnl_volt-dep_bsu_KCNAB2"/>
</dbReference>
<dbReference type="InterPro" id="IPR023210">
    <property type="entry name" value="NADP_OxRdtase_dom"/>
</dbReference>
<dbReference type="InterPro" id="IPR036812">
    <property type="entry name" value="NADP_OxRdtase_dom_sf"/>
</dbReference>
<dbReference type="NCBIfam" id="TIGR01293">
    <property type="entry name" value="Kv_beta"/>
    <property type="match status" value="1"/>
</dbReference>
<dbReference type="PANTHER" id="PTHR43150">
    <property type="entry name" value="HYPERKINETIC, ISOFORM M"/>
    <property type="match status" value="1"/>
</dbReference>
<dbReference type="PANTHER" id="PTHR43150:SF1">
    <property type="entry name" value="VOLTAGE-GATED POTASSIUM CHANNEL SUBUNIT BETA-2"/>
    <property type="match status" value="1"/>
</dbReference>
<dbReference type="Pfam" id="PF00248">
    <property type="entry name" value="Aldo_ket_red"/>
    <property type="match status" value="1"/>
</dbReference>
<dbReference type="PRINTS" id="PR01579">
    <property type="entry name" value="KCNAB2CHANEL"/>
</dbReference>
<dbReference type="PRINTS" id="PR01577">
    <property type="entry name" value="KCNABCHANNEL"/>
</dbReference>
<dbReference type="SUPFAM" id="SSF51430">
    <property type="entry name" value="NAD(P)-linked oxidoreductase"/>
    <property type="match status" value="1"/>
</dbReference>
<gene>
    <name type="primary">KCNAB2</name>
    <name type="synonym">KVB2</name>
</gene>
<proteinExistence type="evidence at protein level"/>
<keyword id="KW-0007">Acetylation</keyword>
<keyword id="KW-1003">Cell membrane</keyword>
<keyword id="KW-0966">Cell projection</keyword>
<keyword id="KW-0963">Cytoplasm</keyword>
<keyword id="KW-0206">Cytoskeleton</keyword>
<keyword id="KW-0903">Direct protein sequencing</keyword>
<keyword id="KW-0406">Ion transport</keyword>
<keyword id="KW-0472">Membrane</keyword>
<keyword id="KW-0488">Methylation</keyword>
<keyword id="KW-0521">NADP</keyword>
<keyword id="KW-0560">Oxidoreductase</keyword>
<keyword id="KW-0597">Phosphoprotein</keyword>
<keyword id="KW-0630">Potassium</keyword>
<keyword id="KW-0633">Potassium transport</keyword>
<keyword id="KW-1185">Reference proteome</keyword>
<keyword id="KW-0770">Synapse</keyword>
<keyword id="KW-0771">Synaptosome</keyword>
<keyword id="KW-0813">Transport</keyword>
<comment type="function">
    <text evidence="1 2 3">Regulatory subunit of the voltage-gated potassium (Kv) Shaker channels composed of pore-forming and potassium-conducting alpha subunits and of regulatory beta subunits. The beta-2/KCNAB2 cytoplasmic subunit promotes potassium channel closure via a mechanism that does not involve physical obstruction of the channel pore. Promotes the inactivation of Kv1.4/KCNA4 and Kv1.5/KCNA5 alpha subunit-containing channels (By similarity). Displays nicotinamide adenine dinucleotide phosphate (NADPH)-dependent aldoketoreductase activity by catalyzing the NADPH-dependent reduction of a wide range of aldehyde and ketone substrates. Substrate specificity includes methylglyoxal, 9,10-phenanthrenequinone, prostaglandin J2, 4-nitrobenzaldehyde, 4-nitroacetophenone and 4-oxo-trans-2-nonenal (in vitro, no physiological substrate identified yet). The binding of oxidized and reduced nucleotide alters Kv channel gating and may contribute to dynamic fine tuning of cell excitability (By similarity). Contributes to the regulation of nerve signaling, and prevents neuronal hyperexcitability (By similarity).</text>
</comment>
<comment type="catalytic activity">
    <reaction evidence="2">
        <text>hydroxyacetone + NADP(+) = methylglyoxal + NADPH + H(+)</text>
        <dbReference type="Rhea" id="RHEA:27986"/>
        <dbReference type="ChEBI" id="CHEBI:15378"/>
        <dbReference type="ChEBI" id="CHEBI:17158"/>
        <dbReference type="ChEBI" id="CHEBI:27957"/>
        <dbReference type="ChEBI" id="CHEBI:57783"/>
        <dbReference type="ChEBI" id="CHEBI:58349"/>
    </reaction>
    <physiologicalReaction direction="right-to-left" evidence="2">
        <dbReference type="Rhea" id="RHEA:27988"/>
    </physiologicalReaction>
</comment>
<comment type="catalytic activity">
    <reaction evidence="2">
        <text>(E)-4-oxonon-2-en-1-ol + NADP(+) = (E)-4-oxonon-2-enal + NADPH + H(+)</text>
        <dbReference type="Rhea" id="RHEA:58432"/>
        <dbReference type="ChEBI" id="CHEBI:15378"/>
        <dbReference type="ChEBI" id="CHEBI:57783"/>
        <dbReference type="ChEBI" id="CHEBI:58349"/>
        <dbReference type="ChEBI" id="CHEBI:58972"/>
        <dbReference type="ChEBI" id="CHEBI:142624"/>
    </reaction>
    <physiologicalReaction direction="right-to-left" evidence="2">
        <dbReference type="Rhea" id="RHEA:58434"/>
    </physiologicalReaction>
</comment>
<comment type="subunit">
    <text evidence="2 4">Homotetramer. Interaction with tetrameric potassium channel alpha subunits gives rise to a heterooctamer (By similarity). Identified in potassium channel complexes containing KCNA1, KCNA2, KCNA4, KCNA5, KCNA6, KCNAB1, KCNAB2 and KCND3 (PubMed:11086297). Interacts (in unphosphorylated form) with MAPRE1. Forms a ternary complex with SQSTM1 and PRKCZ (By similarity).</text>
</comment>
<comment type="subcellular location">
    <subcellularLocation>
        <location evidence="2">Cytoplasm</location>
    </subcellularLocation>
    <subcellularLocation>
        <location evidence="4">Membrane</location>
        <topology evidence="5">Peripheral membrane protein</topology>
        <orientation evidence="5">Cytoplasmic side</orientation>
    </subcellularLocation>
    <subcellularLocation>
        <location evidence="2">Cell membrane</location>
        <topology evidence="5">Peripheral membrane protein</topology>
        <orientation evidence="5">Cytoplasmic side</orientation>
    </subcellularLocation>
    <subcellularLocation>
        <location evidence="4">Cell projection</location>
        <location evidence="4">Axon</location>
    </subcellularLocation>
    <subcellularLocation>
        <location evidence="2">Synapse</location>
        <location evidence="2">Synaptosome</location>
    </subcellularLocation>
    <subcellularLocation>
        <location evidence="2">Cytoplasm</location>
        <location evidence="2">Cytoskeleton</location>
    </subcellularLocation>
    <text evidence="2">Recruited to the cytoplasmic side of the cell membrane via its interaction with pore-forming potassium channel alpha subunits. Associates with microtubules when unphosphorylated.</text>
</comment>
<comment type="tissue specificity">
    <text evidence="4">Detected in the juxtaparanodal region of nodes of Ranvier in myelinated nerve fibers in the spinal cord (at protein level).</text>
</comment>
<comment type="domain">
    <text evidence="3">In contrast to KCNAB1, the shorter N-terminal domain of KCNAB2 cannot mediate closure of delayed rectifier potassium channels by physically obstructing the pore.</text>
</comment>
<comment type="PTM">
    <text evidence="2">Phosphorylated by PRKCZ; may be regulated by incorporation in a complex composed of PRKCZ and SQSTM1.</text>
</comment>
<comment type="similarity">
    <text evidence="5">Belongs to the shaker potassium channel beta subunit family.</text>
</comment>
<evidence type="ECO:0000250" key="1">
    <source>
        <dbReference type="UniProtKB" id="P62482"/>
    </source>
</evidence>
<evidence type="ECO:0000250" key="2">
    <source>
        <dbReference type="UniProtKB" id="P62483"/>
    </source>
</evidence>
<evidence type="ECO:0000250" key="3">
    <source>
        <dbReference type="UniProtKB" id="Q13303"/>
    </source>
</evidence>
<evidence type="ECO:0000269" key="4">
    <source>
    </source>
</evidence>
<evidence type="ECO:0000305" key="5"/>
<sequence>MYPESTTGSPARLSLRQTGSPGMIYSTRYGSPKRQLQFYRNLGKSGLRVSCLGLGTWVTFGGQITDEMAEQLMTLAYDNGINLFDTAEVYAAGKAEVVLGNIIKKKGWRRSSLVITTKIFWGGKAETERGLSRKHIIEGLKASLERLQLEYVDVVFANRPDPNTPMEETVRAMTHVINQGMAMYWGTSRWSSMEIMEAYSVARQFNLIPPICEQAEYHMFQREKVEVQLPELFHKIGVGAMTWSPLACGIVSGKYDSGIPPYSRASLKGYQWLKDKILSEEGRRQQAKLKELQAIAERLGCTLPQLAIAWCLRNEGVSSVLLGASSADQLMENIGAIQVLPKLSSSIIHEIDSILGNKPYSKKDYRS</sequence>
<organism>
    <name type="scientific">Bos taurus</name>
    <name type="common">Bovine</name>
    <dbReference type="NCBI Taxonomy" id="9913"/>
    <lineage>
        <taxon>Eukaryota</taxon>
        <taxon>Metazoa</taxon>
        <taxon>Chordata</taxon>
        <taxon>Craniata</taxon>
        <taxon>Vertebrata</taxon>
        <taxon>Euteleostomi</taxon>
        <taxon>Mammalia</taxon>
        <taxon>Eutheria</taxon>
        <taxon>Laurasiatheria</taxon>
        <taxon>Artiodactyla</taxon>
        <taxon>Ruminantia</taxon>
        <taxon>Pecora</taxon>
        <taxon>Bovidae</taxon>
        <taxon>Bovinae</taxon>
        <taxon>Bos</taxon>
    </lineage>
</organism>
<feature type="chain" id="PRO_0000148745" description="Voltage-gated potassium channel subunit beta-2">
    <location>
        <begin position="1"/>
        <end position="367"/>
    </location>
</feature>
<feature type="active site" description="Proton donor/acceptor" evidence="2">
    <location>
        <position position="90"/>
    </location>
</feature>
<feature type="binding site" evidence="2">
    <location>
        <position position="56"/>
    </location>
    <ligand>
        <name>NADP(+)</name>
        <dbReference type="ChEBI" id="CHEBI:58349"/>
    </ligand>
</feature>
<feature type="binding site" evidence="2">
    <location>
        <position position="57"/>
    </location>
    <ligand>
        <name>NADP(+)</name>
        <dbReference type="ChEBI" id="CHEBI:58349"/>
    </ligand>
</feature>
<feature type="binding site" evidence="2">
    <location>
        <position position="63"/>
    </location>
    <ligand>
        <name>NADP(+)</name>
        <dbReference type="ChEBI" id="CHEBI:58349"/>
    </ligand>
</feature>
<feature type="binding site" evidence="2">
    <location>
        <position position="85"/>
    </location>
    <ligand>
        <name>NADP(+)</name>
        <dbReference type="ChEBI" id="CHEBI:58349"/>
    </ligand>
</feature>
<feature type="binding site" evidence="2">
    <location>
        <position position="158"/>
    </location>
    <ligand>
        <name>NADP(+)</name>
        <dbReference type="ChEBI" id="CHEBI:58349"/>
    </ligand>
</feature>
<feature type="binding site" evidence="2">
    <location>
        <position position="188"/>
    </location>
    <ligand>
        <name>NADP(+)</name>
        <dbReference type="ChEBI" id="CHEBI:58349"/>
    </ligand>
</feature>
<feature type="binding site" evidence="2">
    <location>
        <position position="189"/>
    </location>
    <ligand>
        <name>NADP(+)</name>
        <dbReference type="ChEBI" id="CHEBI:58349"/>
    </ligand>
</feature>
<feature type="binding site" evidence="2">
    <location>
        <position position="214"/>
    </location>
    <ligand>
        <name>NADP(+)</name>
        <dbReference type="ChEBI" id="CHEBI:58349"/>
    </ligand>
</feature>
<feature type="binding site" evidence="2">
    <location>
        <position position="243"/>
    </location>
    <ligand>
        <name>NADP(+)</name>
        <dbReference type="ChEBI" id="CHEBI:58349"/>
    </ligand>
</feature>
<feature type="binding site" evidence="2">
    <location>
        <position position="244"/>
    </location>
    <ligand>
        <name>NADP(+)</name>
        <dbReference type="ChEBI" id="CHEBI:58349"/>
    </ligand>
</feature>
<feature type="binding site" evidence="2">
    <location>
        <position position="245"/>
    </location>
    <ligand>
        <name>NADP(+)</name>
        <dbReference type="ChEBI" id="CHEBI:58349"/>
    </ligand>
</feature>
<feature type="binding site" evidence="2">
    <location>
        <position position="246"/>
    </location>
    <ligand>
        <name>NADP(+)</name>
        <dbReference type="ChEBI" id="CHEBI:58349"/>
    </ligand>
</feature>
<feature type="binding site" evidence="2">
    <location>
        <position position="247"/>
    </location>
    <ligand>
        <name>NADP(+)</name>
        <dbReference type="ChEBI" id="CHEBI:58349"/>
    </ligand>
</feature>
<feature type="binding site" evidence="2">
    <location>
        <position position="248"/>
    </location>
    <ligand>
        <name>NADP(+)</name>
        <dbReference type="ChEBI" id="CHEBI:58349"/>
    </ligand>
</feature>
<feature type="binding site" evidence="2">
    <location>
        <position position="254"/>
    </location>
    <ligand>
        <name>NADP(+)</name>
        <dbReference type="ChEBI" id="CHEBI:58349"/>
    </ligand>
</feature>
<feature type="binding site" evidence="2">
    <location>
        <position position="262"/>
    </location>
    <ligand>
        <name>NADP(+)</name>
        <dbReference type="ChEBI" id="CHEBI:58349"/>
    </ligand>
</feature>
<feature type="binding site" evidence="2">
    <location>
        <position position="264"/>
    </location>
    <ligand>
        <name>NADP(+)</name>
        <dbReference type="ChEBI" id="CHEBI:58349"/>
    </ligand>
</feature>
<feature type="binding site" evidence="2">
    <location>
        <position position="323"/>
    </location>
    <ligand>
        <name>NADP(+)</name>
        <dbReference type="ChEBI" id="CHEBI:58349"/>
    </ligand>
</feature>
<feature type="binding site" evidence="2">
    <location>
        <position position="325"/>
    </location>
    <ligand>
        <name>NADP(+)</name>
        <dbReference type="ChEBI" id="CHEBI:58349"/>
    </ligand>
</feature>
<feature type="binding site" evidence="2">
    <location>
        <position position="329"/>
    </location>
    <ligand>
        <name>NADP(+)</name>
        <dbReference type="ChEBI" id="CHEBI:58349"/>
    </ligand>
</feature>
<feature type="binding site" evidence="2">
    <location>
        <position position="332"/>
    </location>
    <ligand>
        <name>NADP(+)</name>
        <dbReference type="ChEBI" id="CHEBI:58349"/>
    </ligand>
</feature>
<feature type="binding site" evidence="2">
    <location>
        <position position="333"/>
    </location>
    <ligand>
        <name>NADP(+)</name>
        <dbReference type="ChEBI" id="CHEBI:58349"/>
    </ligand>
</feature>
<feature type="modified residue" description="Phosphoserine" evidence="3">
    <location>
        <position position="9"/>
    </location>
</feature>
<feature type="modified residue" description="Phosphoserine" evidence="3">
    <location>
        <position position="14"/>
    </location>
</feature>
<feature type="modified residue" description="Phosphoserine" evidence="1">
    <location>
        <position position="20"/>
    </location>
</feature>
<feature type="modified residue" description="Asymmetric dimethylarginine; alternate" evidence="3">
    <location>
        <position position="28"/>
    </location>
</feature>
<feature type="modified residue" description="Omega-N-methylarginine; alternate" evidence="1">
    <location>
        <position position="28"/>
    </location>
</feature>
<feature type="modified residue" description="Phosphoserine" evidence="3">
    <location>
        <position position="31"/>
    </location>
</feature>
<feature type="modified residue" description="Phosphoserine" evidence="3">
    <location>
        <position position="112"/>
    </location>
</feature>
<feature type="modified residue" description="N6-acetyllysine" evidence="3">
    <location>
        <position position="124"/>
    </location>
</feature>
<accession>Q27955</accession>
<accession>Q58HC4</accession>
<protein>
    <recommendedName>
        <fullName>Voltage-gated potassium channel subunit beta-2</fullName>
        <ecNumber evidence="2">1.1.1.-</ecNumber>
    </recommendedName>
    <alternativeName>
        <fullName>K(+) channel subunit beta-2</fullName>
    </alternativeName>
    <alternativeName>
        <fullName>Kv-beta-2</fullName>
    </alternativeName>
</protein>
<name>KCAB2_BOVIN</name>